<name>ETFA_BOVIN</name>
<proteinExistence type="evidence at transcript level"/>
<keyword id="KW-0007">Acetylation</keyword>
<keyword id="KW-0249">Electron transport</keyword>
<keyword id="KW-0274">FAD</keyword>
<keyword id="KW-0285">Flavoprotein</keyword>
<keyword id="KW-0496">Mitochondrion</keyword>
<keyword id="KW-0597">Phosphoprotein</keyword>
<keyword id="KW-1185">Reference proteome</keyword>
<keyword id="KW-0809">Transit peptide</keyword>
<keyword id="KW-0813">Transport</keyword>
<accession>Q2KJE4</accession>
<feature type="transit peptide" description="Mitochondrion" evidence="3">
    <location>
        <begin position="1"/>
        <end position="19"/>
    </location>
</feature>
<feature type="chain" id="PRO_0000247194" description="Electron transfer flavoprotein subunit alpha, mitochondrial">
    <location>
        <begin position="20"/>
        <end position="333"/>
    </location>
</feature>
<feature type="region of interest" description="Domain I" evidence="1">
    <location>
        <begin position="20"/>
        <end position="204"/>
    </location>
</feature>
<feature type="region of interest" description="Domain II" evidence="1">
    <location>
        <begin position="205"/>
        <end position="333"/>
    </location>
</feature>
<feature type="binding site" evidence="1">
    <location>
        <position position="223"/>
    </location>
    <ligand>
        <name>FAD</name>
        <dbReference type="ChEBI" id="CHEBI:57692"/>
    </ligand>
</feature>
<feature type="binding site" evidence="1">
    <location>
        <position position="248"/>
    </location>
    <ligand>
        <name>FAD</name>
        <dbReference type="ChEBI" id="CHEBI:57692"/>
    </ligand>
</feature>
<feature type="binding site" evidence="1">
    <location>
        <begin position="263"/>
        <end position="266"/>
    </location>
    <ligand>
        <name>FAD</name>
        <dbReference type="ChEBI" id="CHEBI:57692"/>
    </ligand>
</feature>
<feature type="binding site" evidence="1">
    <location>
        <begin position="281"/>
        <end position="286"/>
    </location>
    <ligand>
        <name>FAD</name>
        <dbReference type="ChEBI" id="CHEBI:57692"/>
    </ligand>
</feature>
<feature type="binding site" evidence="1">
    <location>
        <position position="300"/>
    </location>
    <ligand>
        <name>FAD</name>
        <dbReference type="ChEBI" id="CHEBI:57692"/>
    </ligand>
</feature>
<feature type="binding site" evidence="1">
    <location>
        <begin position="318"/>
        <end position="319"/>
    </location>
    <ligand>
        <name>FAD</name>
        <dbReference type="ChEBI" id="CHEBI:57692"/>
    </ligand>
</feature>
<feature type="modified residue" description="N6-acetyllysine; alternate" evidence="2">
    <location>
        <position position="59"/>
    </location>
</feature>
<feature type="modified residue" description="N6-succinyllysine; alternate" evidence="2">
    <location>
        <position position="59"/>
    </location>
</feature>
<feature type="modified residue" description="N6-acetyllysine" evidence="2">
    <location>
        <position position="62"/>
    </location>
</feature>
<feature type="modified residue" description="N6-acetyllysine; alternate" evidence="2">
    <location>
        <position position="69"/>
    </location>
</feature>
<feature type="modified residue" description="N6-succinyllysine; alternate" evidence="2">
    <location>
        <position position="69"/>
    </location>
</feature>
<feature type="modified residue" description="N6-acetyllysine" evidence="2">
    <location>
        <position position="75"/>
    </location>
</feature>
<feature type="modified residue" description="N6-acetyllysine; alternate" evidence="2">
    <location>
        <position position="85"/>
    </location>
</feature>
<feature type="modified residue" description="N6-succinyllysine; alternate" evidence="2">
    <location>
        <position position="85"/>
    </location>
</feature>
<feature type="modified residue" description="Phosphothreonine" evidence="2">
    <location>
        <position position="93"/>
    </location>
</feature>
<feature type="modified residue" description="N6-acetyllysine" evidence="2">
    <location>
        <position position="101"/>
    </location>
</feature>
<feature type="modified residue" description="N6-acetyllysine" evidence="2">
    <location>
        <position position="139"/>
    </location>
</feature>
<feature type="modified residue" description="Phosphoserine" evidence="1">
    <location>
        <position position="140"/>
    </location>
</feature>
<feature type="modified residue" description="N6-acetyllysine; alternate" evidence="2">
    <location>
        <position position="158"/>
    </location>
</feature>
<feature type="modified residue" description="N6-succinyllysine; alternate" evidence="2">
    <location>
        <position position="158"/>
    </location>
</feature>
<feature type="modified residue" description="N6-acetyllysine" evidence="2">
    <location>
        <position position="164"/>
    </location>
</feature>
<feature type="modified residue" description="N6-succinyllysine" evidence="2">
    <location>
        <position position="187"/>
    </location>
</feature>
<feature type="modified residue" description="N6-acetyllysine; alternate" evidence="2">
    <location>
        <position position="203"/>
    </location>
</feature>
<feature type="modified residue" description="N6-succinyllysine; alternate" evidence="2">
    <location>
        <position position="203"/>
    </location>
</feature>
<feature type="modified residue" description="N6-succinyllysine" evidence="2">
    <location>
        <position position="216"/>
    </location>
</feature>
<feature type="modified residue" description="N6-acetyllysine; alternate" evidence="2">
    <location>
        <position position="226"/>
    </location>
</feature>
<feature type="modified residue" description="N6-succinyllysine; alternate" evidence="2">
    <location>
        <position position="226"/>
    </location>
</feature>
<feature type="modified residue" description="N6-acetyllysine; alternate" evidence="2">
    <location>
        <position position="232"/>
    </location>
</feature>
<feature type="modified residue" description="N6-succinyllysine; alternate" evidence="2">
    <location>
        <position position="232"/>
    </location>
</feature>
<feature type="modified residue" description="N6-succinyllysine" evidence="2">
    <location>
        <position position="301"/>
    </location>
</feature>
<sequence length="333" mass="34961">MFRAAAPGQLRRATSLLRFQSTLVIAEHANDTLAPITLNTITAAKHLGGEVSCLVAGTKCDKVAQDLCKVAGVAKVLVAQHDAYKGLLPEELTPLILATQKQFNHTHICAGASAFGKNLLPRIAAKLDVAPISDIIAIKSPDTFVRTIYAGNAICTVKCDEKVKVFSVRGTSFEAAAASGGSASSEKASSTSPVGISEWLDQKLTKSDRPELTGAKVVVSGGRGLKSGENFKLLYDLADQLHAAVGASRAAVDAGFVTNDLQVGQTGKIVAPELYIAVGISGAIQHLAGMKDSKTIVAINKDPEAPIFQVADYGIVADLFKVVPEMTELLKKK</sequence>
<reference key="1">
    <citation type="submission" date="2005-09" db="EMBL/GenBank/DDBJ databases">
        <authorList>
            <consortium name="NIH - Mammalian Gene Collection (MGC) project"/>
        </authorList>
    </citation>
    <scope>NUCLEOTIDE SEQUENCE [LARGE SCALE MRNA]</scope>
    <source>
        <strain>Hereford</strain>
        <tissue>Testis</tissue>
    </source>
</reference>
<gene>
    <name type="primary">ETFA</name>
</gene>
<evidence type="ECO:0000250" key="1">
    <source>
        <dbReference type="UniProtKB" id="P13804"/>
    </source>
</evidence>
<evidence type="ECO:0000250" key="2">
    <source>
        <dbReference type="UniProtKB" id="Q99LC5"/>
    </source>
</evidence>
<evidence type="ECO:0000255" key="3"/>
<evidence type="ECO:0000305" key="4"/>
<dbReference type="EMBL" id="BC105382">
    <property type="protein sequence ID" value="AAI05383.1"/>
    <property type="molecule type" value="mRNA"/>
</dbReference>
<dbReference type="RefSeq" id="NP_001069290.1">
    <property type="nucleotide sequence ID" value="NM_001075822.1"/>
</dbReference>
<dbReference type="SMR" id="Q2KJE4"/>
<dbReference type="FunCoup" id="Q2KJE4">
    <property type="interactions" value="1801"/>
</dbReference>
<dbReference type="STRING" id="9913.ENSBTAP00000016570"/>
<dbReference type="PaxDb" id="9913-ENSBTAP00000016570"/>
<dbReference type="PeptideAtlas" id="Q2KJE4"/>
<dbReference type="GeneID" id="521892"/>
<dbReference type="KEGG" id="bta:521892"/>
<dbReference type="CTD" id="2108"/>
<dbReference type="eggNOG" id="KOG3954">
    <property type="taxonomic scope" value="Eukaryota"/>
</dbReference>
<dbReference type="InParanoid" id="Q2KJE4"/>
<dbReference type="OrthoDB" id="1715808at2759"/>
<dbReference type="Proteomes" id="UP000009136">
    <property type="component" value="Unplaced"/>
</dbReference>
<dbReference type="GO" id="GO:0005759">
    <property type="term" value="C:mitochondrial matrix"/>
    <property type="evidence" value="ECO:0007669"/>
    <property type="project" value="UniProtKB-SubCell"/>
</dbReference>
<dbReference type="GO" id="GO:0005739">
    <property type="term" value="C:mitochondrion"/>
    <property type="evidence" value="ECO:0000318"/>
    <property type="project" value="GO_Central"/>
</dbReference>
<dbReference type="GO" id="GO:0009055">
    <property type="term" value="F:electron transfer activity"/>
    <property type="evidence" value="ECO:0000250"/>
    <property type="project" value="UniProtKB"/>
</dbReference>
<dbReference type="GO" id="GO:0050660">
    <property type="term" value="F:flavin adenine dinucleotide binding"/>
    <property type="evidence" value="ECO:0000318"/>
    <property type="project" value="GO_Central"/>
</dbReference>
<dbReference type="GO" id="GO:0033539">
    <property type="term" value="P:fatty acid beta-oxidation using acyl-CoA dehydrogenase"/>
    <property type="evidence" value="ECO:0000250"/>
    <property type="project" value="UniProtKB"/>
</dbReference>
<dbReference type="CDD" id="cd01715">
    <property type="entry name" value="ETF_alpha"/>
    <property type="match status" value="1"/>
</dbReference>
<dbReference type="FunFam" id="3.40.50.620:FF:000041">
    <property type="entry name" value="Electron transfer flavoprotein alpha subunit"/>
    <property type="match status" value="1"/>
</dbReference>
<dbReference type="FunFam" id="3.40.50.1220:FF:000001">
    <property type="entry name" value="Electron transfer flavoprotein, alpha subunit"/>
    <property type="match status" value="1"/>
</dbReference>
<dbReference type="Gene3D" id="3.40.50.620">
    <property type="entry name" value="HUPs"/>
    <property type="match status" value="1"/>
</dbReference>
<dbReference type="Gene3D" id="3.40.50.1220">
    <property type="entry name" value="TPP-binding domain"/>
    <property type="match status" value="1"/>
</dbReference>
<dbReference type="InterPro" id="IPR029035">
    <property type="entry name" value="DHS-like_NAD/FAD-binding_dom"/>
</dbReference>
<dbReference type="InterPro" id="IPR014730">
    <property type="entry name" value="ETF_a/b_N"/>
</dbReference>
<dbReference type="InterPro" id="IPR001308">
    <property type="entry name" value="ETF_a/FixB"/>
</dbReference>
<dbReference type="InterPro" id="IPR033947">
    <property type="entry name" value="ETF_alpha_N"/>
</dbReference>
<dbReference type="InterPro" id="IPR014731">
    <property type="entry name" value="ETF_asu_C"/>
</dbReference>
<dbReference type="InterPro" id="IPR018206">
    <property type="entry name" value="ETF_asu_C_CS"/>
</dbReference>
<dbReference type="InterPro" id="IPR014729">
    <property type="entry name" value="Rossmann-like_a/b/a_fold"/>
</dbReference>
<dbReference type="PANTHER" id="PTHR43153">
    <property type="entry name" value="ELECTRON TRANSFER FLAVOPROTEIN ALPHA"/>
    <property type="match status" value="1"/>
</dbReference>
<dbReference type="PANTHER" id="PTHR43153:SF1">
    <property type="entry name" value="ELECTRON TRANSFER FLAVOPROTEIN SUBUNIT ALPHA, MITOCHONDRIAL"/>
    <property type="match status" value="1"/>
</dbReference>
<dbReference type="Pfam" id="PF01012">
    <property type="entry name" value="ETF"/>
    <property type="match status" value="1"/>
</dbReference>
<dbReference type="Pfam" id="PF00766">
    <property type="entry name" value="ETF_alpha"/>
    <property type="match status" value="1"/>
</dbReference>
<dbReference type="PIRSF" id="PIRSF000089">
    <property type="entry name" value="Electra_flavoP_a"/>
    <property type="match status" value="1"/>
</dbReference>
<dbReference type="SMART" id="SM00893">
    <property type="entry name" value="ETF"/>
    <property type="match status" value="1"/>
</dbReference>
<dbReference type="SUPFAM" id="SSF52402">
    <property type="entry name" value="Adenine nucleotide alpha hydrolases-like"/>
    <property type="match status" value="1"/>
</dbReference>
<dbReference type="SUPFAM" id="SSF52467">
    <property type="entry name" value="DHS-like NAD/FAD-binding domain"/>
    <property type="match status" value="1"/>
</dbReference>
<dbReference type="PROSITE" id="PS00696">
    <property type="entry name" value="ETF_ALPHA"/>
    <property type="match status" value="1"/>
</dbReference>
<comment type="function">
    <text evidence="1">Heterodimeric electron transfer flavoprotein that accepts electrons from several mitochondrial dehydrogenases, including acyl-CoA dehydrogenases, glutaryl-CoA and sarcosine dehydrogenase. It transfers the electrons to the main mitochondrial respiratory chain via ETF-ubiquinone oxidoreductase (ETF dehydrogenase). Required for normal mitochondrial fatty acid oxidation and normal amino acid metabolism.</text>
</comment>
<comment type="cofactor">
    <cofactor evidence="1">
        <name>FAD</name>
        <dbReference type="ChEBI" id="CHEBI:57692"/>
    </cofactor>
    <text evidence="1">Binds 1 FAD per dimer.</text>
</comment>
<comment type="subunit">
    <text evidence="1 2">Heterodimer composed of ETFA and ETFB. Identified in a complex that contains ETFA, ETFB and ETFRF1. Interaction with ETFRF1 promotes dissociation of the bound FAD and loss of electron transfer activity (By similarity). Interacts with TASOR (By similarity).</text>
</comment>
<comment type="subcellular location">
    <subcellularLocation>
        <location evidence="1">Mitochondrion matrix</location>
    </subcellularLocation>
</comment>
<comment type="domain">
    <text evidence="1">Domain I shares an identical polypeptide fold with the beta subunit ETFB though there is no sequence similarity.</text>
</comment>
<comment type="similarity">
    <text evidence="4">Belongs to the ETF alpha-subunit/FixB family.</text>
</comment>
<protein>
    <recommendedName>
        <fullName>Electron transfer flavoprotein subunit alpha, mitochondrial</fullName>
        <shortName>Alpha-ETF</shortName>
    </recommendedName>
</protein>
<organism>
    <name type="scientific">Bos taurus</name>
    <name type="common">Bovine</name>
    <dbReference type="NCBI Taxonomy" id="9913"/>
    <lineage>
        <taxon>Eukaryota</taxon>
        <taxon>Metazoa</taxon>
        <taxon>Chordata</taxon>
        <taxon>Craniata</taxon>
        <taxon>Vertebrata</taxon>
        <taxon>Euteleostomi</taxon>
        <taxon>Mammalia</taxon>
        <taxon>Eutheria</taxon>
        <taxon>Laurasiatheria</taxon>
        <taxon>Artiodactyla</taxon>
        <taxon>Ruminantia</taxon>
        <taxon>Pecora</taxon>
        <taxon>Bovidae</taxon>
        <taxon>Bovinae</taxon>
        <taxon>Bos</taxon>
    </lineage>
</organism>